<keyword id="KW-0963">Cytoplasm</keyword>
<keyword id="KW-0460">Magnesium</keyword>
<keyword id="KW-0479">Metal-binding</keyword>
<keyword id="KW-0548">Nucleotidyltransferase</keyword>
<keyword id="KW-0694">RNA-binding</keyword>
<keyword id="KW-0808">Transferase</keyword>
<dbReference type="EC" id="2.7.7.8" evidence="1"/>
<dbReference type="EMBL" id="BX572594">
    <property type="protein sequence ID" value="CAE25876.1"/>
    <property type="molecule type" value="Genomic_DNA"/>
</dbReference>
<dbReference type="RefSeq" id="WP_011156000.1">
    <property type="nucleotide sequence ID" value="NZ_CP116810.1"/>
</dbReference>
<dbReference type="SMR" id="Q6NCN8"/>
<dbReference type="STRING" id="258594.RPA0432"/>
<dbReference type="GeneID" id="66891447"/>
<dbReference type="eggNOG" id="COG1185">
    <property type="taxonomic scope" value="Bacteria"/>
</dbReference>
<dbReference type="HOGENOM" id="CLU_004217_2_2_5"/>
<dbReference type="PhylomeDB" id="Q6NCN8"/>
<dbReference type="GO" id="GO:0005829">
    <property type="term" value="C:cytosol"/>
    <property type="evidence" value="ECO:0007669"/>
    <property type="project" value="TreeGrafter"/>
</dbReference>
<dbReference type="GO" id="GO:0000175">
    <property type="term" value="F:3'-5'-RNA exonuclease activity"/>
    <property type="evidence" value="ECO:0007669"/>
    <property type="project" value="TreeGrafter"/>
</dbReference>
<dbReference type="GO" id="GO:0000287">
    <property type="term" value="F:magnesium ion binding"/>
    <property type="evidence" value="ECO:0007669"/>
    <property type="project" value="UniProtKB-UniRule"/>
</dbReference>
<dbReference type="GO" id="GO:0004654">
    <property type="term" value="F:polyribonucleotide nucleotidyltransferase activity"/>
    <property type="evidence" value="ECO:0007669"/>
    <property type="project" value="UniProtKB-UniRule"/>
</dbReference>
<dbReference type="GO" id="GO:0003723">
    <property type="term" value="F:RNA binding"/>
    <property type="evidence" value="ECO:0007669"/>
    <property type="project" value="UniProtKB-UniRule"/>
</dbReference>
<dbReference type="GO" id="GO:0006402">
    <property type="term" value="P:mRNA catabolic process"/>
    <property type="evidence" value="ECO:0007669"/>
    <property type="project" value="UniProtKB-UniRule"/>
</dbReference>
<dbReference type="GO" id="GO:0006396">
    <property type="term" value="P:RNA processing"/>
    <property type="evidence" value="ECO:0007669"/>
    <property type="project" value="InterPro"/>
</dbReference>
<dbReference type="CDD" id="cd02393">
    <property type="entry name" value="KH-I_PNPase"/>
    <property type="match status" value="1"/>
</dbReference>
<dbReference type="CDD" id="cd11363">
    <property type="entry name" value="RNase_PH_PNPase_1"/>
    <property type="match status" value="1"/>
</dbReference>
<dbReference type="CDD" id="cd11364">
    <property type="entry name" value="RNase_PH_PNPase_2"/>
    <property type="match status" value="1"/>
</dbReference>
<dbReference type="CDD" id="cd04472">
    <property type="entry name" value="S1_PNPase"/>
    <property type="match status" value="1"/>
</dbReference>
<dbReference type="FunFam" id="2.40.50.140:FF:000107">
    <property type="entry name" value="Polyribonucleotide nucleotidyltransferase"/>
    <property type="match status" value="1"/>
</dbReference>
<dbReference type="FunFam" id="3.30.1370.10:FF:000001">
    <property type="entry name" value="Polyribonucleotide nucleotidyltransferase"/>
    <property type="match status" value="1"/>
</dbReference>
<dbReference type="FunFam" id="3.30.230.70:FF:000001">
    <property type="entry name" value="Polyribonucleotide nucleotidyltransferase"/>
    <property type="match status" value="1"/>
</dbReference>
<dbReference type="FunFam" id="3.30.230.70:FF:000002">
    <property type="entry name" value="Polyribonucleotide nucleotidyltransferase"/>
    <property type="match status" value="1"/>
</dbReference>
<dbReference type="Gene3D" id="3.30.230.70">
    <property type="entry name" value="GHMP Kinase, N-terminal domain"/>
    <property type="match status" value="2"/>
</dbReference>
<dbReference type="Gene3D" id="3.30.1370.10">
    <property type="entry name" value="K Homology domain, type 1"/>
    <property type="match status" value="1"/>
</dbReference>
<dbReference type="Gene3D" id="2.40.50.140">
    <property type="entry name" value="Nucleic acid-binding proteins"/>
    <property type="match status" value="1"/>
</dbReference>
<dbReference type="HAMAP" id="MF_01595">
    <property type="entry name" value="PNPase"/>
    <property type="match status" value="1"/>
</dbReference>
<dbReference type="InterPro" id="IPR001247">
    <property type="entry name" value="ExoRNase_PH_dom1"/>
</dbReference>
<dbReference type="InterPro" id="IPR015847">
    <property type="entry name" value="ExoRNase_PH_dom2"/>
</dbReference>
<dbReference type="InterPro" id="IPR036345">
    <property type="entry name" value="ExoRNase_PH_dom2_sf"/>
</dbReference>
<dbReference type="InterPro" id="IPR004087">
    <property type="entry name" value="KH_dom"/>
</dbReference>
<dbReference type="InterPro" id="IPR004088">
    <property type="entry name" value="KH_dom_type_1"/>
</dbReference>
<dbReference type="InterPro" id="IPR036612">
    <property type="entry name" value="KH_dom_type_1_sf"/>
</dbReference>
<dbReference type="InterPro" id="IPR012340">
    <property type="entry name" value="NA-bd_OB-fold"/>
</dbReference>
<dbReference type="InterPro" id="IPR012162">
    <property type="entry name" value="PNPase"/>
</dbReference>
<dbReference type="InterPro" id="IPR027408">
    <property type="entry name" value="PNPase/RNase_PH_dom_sf"/>
</dbReference>
<dbReference type="InterPro" id="IPR015848">
    <property type="entry name" value="PNPase_PH_RNA-bd_bac/org-type"/>
</dbReference>
<dbReference type="InterPro" id="IPR036456">
    <property type="entry name" value="PNPase_PH_RNA-bd_sf"/>
</dbReference>
<dbReference type="InterPro" id="IPR020568">
    <property type="entry name" value="Ribosomal_Su5_D2-typ_SF"/>
</dbReference>
<dbReference type="InterPro" id="IPR003029">
    <property type="entry name" value="S1_domain"/>
</dbReference>
<dbReference type="NCBIfam" id="TIGR03591">
    <property type="entry name" value="polynuc_phos"/>
    <property type="match status" value="1"/>
</dbReference>
<dbReference type="NCBIfam" id="NF008805">
    <property type="entry name" value="PRK11824.1"/>
    <property type="match status" value="1"/>
</dbReference>
<dbReference type="PANTHER" id="PTHR11252">
    <property type="entry name" value="POLYRIBONUCLEOTIDE NUCLEOTIDYLTRANSFERASE"/>
    <property type="match status" value="1"/>
</dbReference>
<dbReference type="PANTHER" id="PTHR11252:SF0">
    <property type="entry name" value="POLYRIBONUCLEOTIDE NUCLEOTIDYLTRANSFERASE 1, MITOCHONDRIAL"/>
    <property type="match status" value="1"/>
</dbReference>
<dbReference type="Pfam" id="PF00013">
    <property type="entry name" value="KH_1"/>
    <property type="match status" value="1"/>
</dbReference>
<dbReference type="Pfam" id="PF03726">
    <property type="entry name" value="PNPase"/>
    <property type="match status" value="1"/>
</dbReference>
<dbReference type="Pfam" id="PF01138">
    <property type="entry name" value="RNase_PH"/>
    <property type="match status" value="2"/>
</dbReference>
<dbReference type="Pfam" id="PF03725">
    <property type="entry name" value="RNase_PH_C"/>
    <property type="match status" value="1"/>
</dbReference>
<dbReference type="Pfam" id="PF00575">
    <property type="entry name" value="S1"/>
    <property type="match status" value="1"/>
</dbReference>
<dbReference type="PIRSF" id="PIRSF005499">
    <property type="entry name" value="PNPase"/>
    <property type="match status" value="1"/>
</dbReference>
<dbReference type="SMART" id="SM00322">
    <property type="entry name" value="KH"/>
    <property type="match status" value="1"/>
</dbReference>
<dbReference type="SMART" id="SM00316">
    <property type="entry name" value="S1"/>
    <property type="match status" value="1"/>
</dbReference>
<dbReference type="SUPFAM" id="SSF54791">
    <property type="entry name" value="Eukaryotic type KH-domain (KH-domain type I)"/>
    <property type="match status" value="1"/>
</dbReference>
<dbReference type="SUPFAM" id="SSF50249">
    <property type="entry name" value="Nucleic acid-binding proteins"/>
    <property type="match status" value="1"/>
</dbReference>
<dbReference type="SUPFAM" id="SSF46915">
    <property type="entry name" value="Polynucleotide phosphorylase/guanosine pentaphosphate synthase (PNPase/GPSI), domain 3"/>
    <property type="match status" value="1"/>
</dbReference>
<dbReference type="SUPFAM" id="SSF55666">
    <property type="entry name" value="Ribonuclease PH domain 2-like"/>
    <property type="match status" value="2"/>
</dbReference>
<dbReference type="SUPFAM" id="SSF54211">
    <property type="entry name" value="Ribosomal protein S5 domain 2-like"/>
    <property type="match status" value="2"/>
</dbReference>
<dbReference type="PROSITE" id="PS50084">
    <property type="entry name" value="KH_TYPE_1"/>
    <property type="match status" value="1"/>
</dbReference>
<dbReference type="PROSITE" id="PS50126">
    <property type="entry name" value="S1"/>
    <property type="match status" value="1"/>
</dbReference>
<protein>
    <recommendedName>
        <fullName evidence="1">Polyribonucleotide nucleotidyltransferase</fullName>
        <ecNumber evidence="1">2.7.7.8</ecNumber>
    </recommendedName>
    <alternativeName>
        <fullName evidence="1">Polynucleotide phosphorylase</fullName>
        <shortName evidence="1">PNPase</shortName>
    </alternativeName>
</protein>
<comment type="function">
    <text evidence="1">Involved in mRNA degradation. Catalyzes the phosphorolysis of single-stranded polyribonucleotides processively in the 3'- to 5'-direction.</text>
</comment>
<comment type="catalytic activity">
    <reaction evidence="1">
        <text>RNA(n+1) + phosphate = RNA(n) + a ribonucleoside 5'-diphosphate</text>
        <dbReference type="Rhea" id="RHEA:22096"/>
        <dbReference type="Rhea" id="RHEA-COMP:14527"/>
        <dbReference type="Rhea" id="RHEA-COMP:17342"/>
        <dbReference type="ChEBI" id="CHEBI:43474"/>
        <dbReference type="ChEBI" id="CHEBI:57930"/>
        <dbReference type="ChEBI" id="CHEBI:140395"/>
        <dbReference type="EC" id="2.7.7.8"/>
    </reaction>
</comment>
<comment type="cofactor">
    <cofactor evidence="1">
        <name>Mg(2+)</name>
        <dbReference type="ChEBI" id="CHEBI:18420"/>
    </cofactor>
</comment>
<comment type="subcellular location">
    <subcellularLocation>
        <location evidence="1">Cytoplasm</location>
    </subcellularLocation>
</comment>
<comment type="similarity">
    <text evidence="1">Belongs to the polyribonucleotide nucleotidyltransferase family.</text>
</comment>
<accession>Q6NCN8</accession>
<name>PNP_RHOPA</name>
<reference key="1">
    <citation type="journal article" date="2004" name="Nat. Biotechnol.">
        <title>Complete genome sequence of the metabolically versatile photosynthetic bacterium Rhodopseudomonas palustris.</title>
        <authorList>
            <person name="Larimer F.W."/>
            <person name="Chain P."/>
            <person name="Hauser L."/>
            <person name="Lamerdin J.E."/>
            <person name="Malfatti S."/>
            <person name="Do L."/>
            <person name="Land M.L."/>
            <person name="Pelletier D.A."/>
            <person name="Beatty J.T."/>
            <person name="Lang A.S."/>
            <person name="Tabita F.R."/>
            <person name="Gibson J.L."/>
            <person name="Hanson T.E."/>
            <person name="Bobst C."/>
            <person name="Torres y Torres J.L."/>
            <person name="Peres C."/>
            <person name="Harrison F.H."/>
            <person name="Gibson J."/>
            <person name="Harwood C.S."/>
        </authorList>
    </citation>
    <scope>NUCLEOTIDE SEQUENCE [LARGE SCALE GENOMIC DNA]</scope>
    <source>
        <strain>ATCC BAA-98 / CGA009</strain>
    </source>
</reference>
<gene>
    <name evidence="1" type="primary">pnp</name>
    <name type="ordered locus">RPA0432</name>
</gene>
<organism>
    <name type="scientific">Rhodopseudomonas palustris (strain ATCC BAA-98 / CGA009)</name>
    <dbReference type="NCBI Taxonomy" id="258594"/>
    <lineage>
        <taxon>Bacteria</taxon>
        <taxon>Pseudomonadati</taxon>
        <taxon>Pseudomonadota</taxon>
        <taxon>Alphaproteobacteria</taxon>
        <taxon>Hyphomicrobiales</taxon>
        <taxon>Nitrobacteraceae</taxon>
        <taxon>Rhodopseudomonas</taxon>
    </lineage>
</organism>
<sequence length="722" mass="78285">MFNIHSVEIDWGGRPLKLETGKVARQADGAVVATYGETVVLATVVAAKAPREGVDFLPLTVDYQEKAYAAGRIPGGYFKREGRPTEKETLVSRLIDRPIRPLFADGWRNETQVIVTVLSHDMENDPDVLAMVAASAALTLSGVPFKGPIGAARVGFINDEYVLNPVLDEMAETQLELVVAGTADAVLMVESEAKELSEEIMLGAVMFGHRHFQPVIDAIIDLAEKAAKEPRELTVVDDSEIEKEMLGLVEQELRAAYAIPVKQDRYAAVGKVKEKAIAHFFPEGQEPKYDKLRIAGVFKELEAKIVRWNILDTGKRIDGRDSKTVRNILAQVGVLPRTHGSALFTRGETQAMVVTTLGTGEDEQYVDSLSGTYKETFLLHYNFPPYSVGETGRLGGTKRREIGHGKLAWRAIHPVLPPHHEFPYTIRVVSEITESNGSSSMASVCGASLALMDAGVPLKRPTAGIAMGLILEGERFAVLSDILGDEDHLGDMDFKVAGTEAGITSLQMDIKIAGITEEIMKVALGQAKDGRIHILGEMSKALDRARAELGEHAPRIETFKIPTDKIREVIGTGGKVIREIVEKTGAKVNIEDDGTVKVASSDGESIKAAIKWIKSIASDPEVGEIYEGTVVKVMEFGAFVNFFGAKDGLVHISQLAAGRVQKTSDVVKEGDKVKVKLLGFDDRGKTRLSMKVVDQTTGEDLEAKQKAEAKAEGEAPAQAAGE</sequence>
<proteinExistence type="inferred from homology"/>
<feature type="chain" id="PRO_0000329809" description="Polyribonucleotide nucleotidyltransferase">
    <location>
        <begin position="1"/>
        <end position="722"/>
    </location>
</feature>
<feature type="domain" description="KH" evidence="1">
    <location>
        <begin position="554"/>
        <end position="613"/>
    </location>
</feature>
<feature type="domain" description="S1 motif" evidence="1">
    <location>
        <begin position="623"/>
        <end position="691"/>
    </location>
</feature>
<feature type="region of interest" description="Disordered" evidence="2">
    <location>
        <begin position="697"/>
        <end position="722"/>
    </location>
</feature>
<feature type="compositionally biased region" description="Basic and acidic residues" evidence="2">
    <location>
        <begin position="701"/>
        <end position="713"/>
    </location>
</feature>
<feature type="binding site" evidence="1">
    <location>
        <position position="487"/>
    </location>
    <ligand>
        <name>Mg(2+)</name>
        <dbReference type="ChEBI" id="CHEBI:18420"/>
    </ligand>
</feature>
<feature type="binding site" evidence="1">
    <location>
        <position position="493"/>
    </location>
    <ligand>
        <name>Mg(2+)</name>
        <dbReference type="ChEBI" id="CHEBI:18420"/>
    </ligand>
</feature>
<evidence type="ECO:0000255" key="1">
    <source>
        <dbReference type="HAMAP-Rule" id="MF_01595"/>
    </source>
</evidence>
<evidence type="ECO:0000256" key="2">
    <source>
        <dbReference type="SAM" id="MobiDB-lite"/>
    </source>
</evidence>